<dbReference type="EMBL" id="AY813788">
    <property type="protein sequence ID" value="AAW25520.1"/>
    <property type="molecule type" value="mRNA"/>
</dbReference>
<dbReference type="EMBL" id="EF127839">
    <property type="protein sequence ID" value="ABL86194.1"/>
    <property type="molecule type" value="mRNA"/>
</dbReference>
<dbReference type="SMR" id="Q5DF86"/>
<dbReference type="GO" id="GO:0005576">
    <property type="term" value="C:extracellular region"/>
    <property type="evidence" value="ECO:0007669"/>
    <property type="project" value="UniProtKB-SubCell"/>
</dbReference>
<dbReference type="InterPro" id="IPR021712">
    <property type="entry name" value="UPF0506"/>
</dbReference>
<dbReference type="Pfam" id="PF11703">
    <property type="entry name" value="UPF0506"/>
    <property type="match status" value="1"/>
</dbReference>
<protein>
    <recommendedName>
        <fullName>UPF0506 protein SJCHGC03144</fullName>
    </recommendedName>
</protein>
<comment type="subcellular location">
    <subcellularLocation>
        <location evidence="2">Secreted</location>
    </subcellularLocation>
</comment>
<comment type="domain">
    <text evidence="2">The presence of a 'disulfide through disulfide knot' structurally defines this protein as a knottin.</text>
</comment>
<comment type="similarity">
    <text evidence="2">Belongs to the UPF0506 family.</text>
</comment>
<sequence>MNTCIQLLILCLVTVINSENLTDISTETTIENEIENATETELSEAIEKETENVTETELPDTVKTEIQFETQNLPHNPKQKYCRTEGQYCSRTYFHRCCGNLVCQLHGFFNGTCVQCLAERKFCIWSSECCSKRCRLFRCRKNPYVQVIPY</sequence>
<reference key="1">
    <citation type="journal article" date="2006" name="PLoS Pathog.">
        <title>New perspectives on host-parasite interplay by comparative transcriptomic and proteomic analyses of Schistosoma japonicum.</title>
        <authorList>
            <person name="Liu F."/>
            <person name="Lu J."/>
            <person name="Hu W."/>
            <person name="Wang S.-Y."/>
            <person name="Cui S.-J."/>
            <person name="Chi M."/>
            <person name="Yan Q."/>
            <person name="Wang X.-R."/>
            <person name="Song H.-D."/>
            <person name="Xu X.-N."/>
            <person name="Wang J.-J."/>
            <person name="Zhang X.-L."/>
            <person name="Zhang X."/>
            <person name="Wang Z.-Q."/>
            <person name="Xue C.-L."/>
            <person name="Brindley P.J."/>
            <person name="McManus D.P."/>
            <person name="Yang P.-Y."/>
            <person name="Feng Z."/>
            <person name="Chen Z."/>
            <person name="Han Z.-G."/>
        </authorList>
    </citation>
    <scope>NUCLEOTIDE SEQUENCE [LARGE SCALE MRNA]</scope>
</reference>
<reference key="2">
    <citation type="submission" date="2006-11" db="EMBL/GenBank/DDBJ databases">
        <title>Genes harboring signal sequence of Schistosoma japonicum (Mainland strain).</title>
        <authorList>
            <person name="Yu C."/>
            <person name="Li J."/>
            <person name="Yin X."/>
            <person name="Xu Y."/>
            <person name="Gao Q."/>
            <person name="Liang Y."/>
            <person name="Xu M."/>
        </authorList>
    </citation>
    <scope>NUCLEOTIDE SEQUENCE [MRNA]</scope>
    <source>
        <strain>Chinese</strain>
    </source>
</reference>
<proteinExistence type="evidence at transcript level"/>
<organism>
    <name type="scientific">Schistosoma japonicum</name>
    <name type="common">Blood fluke</name>
    <dbReference type="NCBI Taxonomy" id="6182"/>
    <lineage>
        <taxon>Eukaryota</taxon>
        <taxon>Metazoa</taxon>
        <taxon>Spiralia</taxon>
        <taxon>Lophotrochozoa</taxon>
        <taxon>Platyhelminthes</taxon>
        <taxon>Trematoda</taxon>
        <taxon>Digenea</taxon>
        <taxon>Strigeidida</taxon>
        <taxon>Schistosomatoidea</taxon>
        <taxon>Schistosomatidae</taxon>
        <taxon>Schistosoma</taxon>
    </lineage>
</organism>
<feature type="signal peptide" evidence="1">
    <location>
        <begin position="1"/>
        <end position="18"/>
    </location>
</feature>
<feature type="chain" id="PRO_0000311407" description="UPF0506 protein SJCHGC03144">
    <location>
        <begin position="19"/>
        <end position="150"/>
    </location>
</feature>
<feature type="glycosylation site" description="N-linked (GlcNAc...) asparagine" evidence="1">
    <location>
        <position position="20"/>
    </location>
</feature>
<feature type="glycosylation site" description="N-linked (GlcNAc...) asparagine" evidence="1">
    <location>
        <position position="36"/>
    </location>
</feature>
<feature type="glycosylation site" description="N-linked (GlcNAc...) asparagine" evidence="1">
    <location>
        <position position="52"/>
    </location>
</feature>
<feature type="glycosylation site" description="N-linked (GlcNAc...) asparagine" evidence="1">
    <location>
        <position position="110"/>
    </location>
</feature>
<feature type="disulfide bond" evidence="2">
    <location>
        <begin position="116"/>
        <end position="130"/>
    </location>
</feature>
<feature type="disulfide bond" evidence="2">
    <location>
        <begin position="123"/>
        <end position="134"/>
    </location>
</feature>
<feature type="disulfide bond" evidence="2">
    <location>
        <begin position="129"/>
        <end position="139"/>
    </location>
</feature>
<gene>
    <name type="ORF">SJCHGC03144</name>
</gene>
<keyword id="KW-1015">Disulfide bond</keyword>
<keyword id="KW-0325">Glycoprotein</keyword>
<keyword id="KW-0960">Knottin</keyword>
<keyword id="KW-0964">Secreted</keyword>
<keyword id="KW-0732">Signal</keyword>
<accession>Q5DF86</accession>
<name>SJ144_SCHJA</name>
<evidence type="ECO:0000255" key="1"/>
<evidence type="ECO:0000305" key="2"/>